<dbReference type="EC" id="6.5.1.8" evidence="3 4"/>
<dbReference type="EC" id="3.1.-.-"/>
<dbReference type="EMBL" id="BA000001">
    <property type="protein sequence ID" value="BAA30714.1"/>
    <property type="molecule type" value="Genomic_DNA"/>
</dbReference>
<dbReference type="PIR" id="B71039">
    <property type="entry name" value="B71039"/>
</dbReference>
<dbReference type="RefSeq" id="WP_010885677.1">
    <property type="nucleotide sequence ID" value="NC_000961.1"/>
</dbReference>
<dbReference type="PDB" id="1UC2">
    <property type="method" value="X-ray"/>
    <property type="resolution" value="2.15 A"/>
    <property type="chains" value="A/B=1-97, A/B=488-871"/>
</dbReference>
<dbReference type="PDB" id="4DWQ">
    <property type="method" value="X-ray"/>
    <property type="resolution" value="2.25 A"/>
    <property type="chains" value="A/B=1-97, A/B=488-871"/>
</dbReference>
<dbReference type="PDB" id="4DWR">
    <property type="method" value="X-ray"/>
    <property type="resolution" value="1.48 A"/>
    <property type="chains" value="A/B=1-97, A/B=488-871"/>
</dbReference>
<dbReference type="PDB" id="4ISJ">
    <property type="method" value="X-ray"/>
    <property type="resolution" value="2.34 A"/>
    <property type="chains" value="A/B=1-97, A/B=488-871"/>
</dbReference>
<dbReference type="PDB" id="4ISZ">
    <property type="method" value="X-ray"/>
    <property type="resolution" value="2.30 A"/>
    <property type="chains" value="A/B=1-97, A/B=488-871"/>
</dbReference>
<dbReference type="PDB" id="4IT0">
    <property type="method" value="X-ray"/>
    <property type="resolution" value="2.40 A"/>
    <property type="chains" value="A/B=1-97, A/B=488-871"/>
</dbReference>
<dbReference type="PDB" id="7LFQ">
    <property type="method" value="X-ray"/>
    <property type="resolution" value="2.70 A"/>
    <property type="chains" value="A=406-871"/>
</dbReference>
<dbReference type="PDB" id="8DC9">
    <property type="method" value="X-ray"/>
    <property type="resolution" value="2.47 A"/>
    <property type="chains" value="A/B=406-871"/>
</dbReference>
<dbReference type="PDB" id="8DCA">
    <property type="method" value="X-ray"/>
    <property type="resolution" value="2.43 A"/>
    <property type="chains" value="A/B=406-871"/>
</dbReference>
<dbReference type="PDB" id="8DCB">
    <property type="method" value="X-ray"/>
    <property type="resolution" value="2.60 A"/>
    <property type="chains" value="A/B=406-871"/>
</dbReference>
<dbReference type="PDB" id="8DCD">
    <property type="method" value="X-ray"/>
    <property type="resolution" value="2.22 A"/>
    <property type="chains" value="A/B=406-871"/>
</dbReference>
<dbReference type="PDB" id="8DCF">
    <property type="method" value="X-ray"/>
    <property type="resolution" value="2.42 A"/>
    <property type="chains" value="A/B=406-871"/>
</dbReference>
<dbReference type="PDB" id="8DCG">
    <property type="method" value="X-ray"/>
    <property type="resolution" value="2.35 A"/>
    <property type="chains" value="A/B=406-871"/>
</dbReference>
<dbReference type="PDBsum" id="1UC2"/>
<dbReference type="PDBsum" id="4DWQ"/>
<dbReference type="PDBsum" id="4DWR"/>
<dbReference type="PDBsum" id="4ISJ"/>
<dbReference type="PDBsum" id="4ISZ"/>
<dbReference type="PDBsum" id="4IT0"/>
<dbReference type="PDBsum" id="7LFQ"/>
<dbReference type="PDBsum" id="8DC9"/>
<dbReference type="PDBsum" id="8DCA"/>
<dbReference type="PDBsum" id="8DCB"/>
<dbReference type="PDBsum" id="8DCD"/>
<dbReference type="PDBsum" id="8DCF"/>
<dbReference type="PDBsum" id="8DCG"/>
<dbReference type="SMR" id="O59245"/>
<dbReference type="STRING" id="70601.gene:9378592"/>
<dbReference type="EnsemblBacteria" id="BAA30714">
    <property type="protein sequence ID" value="BAA30714"/>
    <property type="gene ID" value="BAA30714"/>
</dbReference>
<dbReference type="GeneID" id="1442456"/>
<dbReference type="KEGG" id="pho:PH1602"/>
<dbReference type="eggNOG" id="arCOG03158">
    <property type="taxonomic scope" value="Archaea"/>
</dbReference>
<dbReference type="eggNOG" id="arCOG04246">
    <property type="taxonomic scope" value="Archaea"/>
</dbReference>
<dbReference type="OrthoDB" id="9887at2157"/>
<dbReference type="BRENDA" id="6.5.1.8">
    <property type="organism ID" value="5244"/>
</dbReference>
<dbReference type="EvolutionaryTrace" id="O59245"/>
<dbReference type="Proteomes" id="UP000000752">
    <property type="component" value="Chromosome"/>
</dbReference>
<dbReference type="GO" id="GO:0003677">
    <property type="term" value="F:DNA binding"/>
    <property type="evidence" value="ECO:0007669"/>
    <property type="project" value="UniProtKB-KW"/>
</dbReference>
<dbReference type="GO" id="GO:0004519">
    <property type="term" value="F:endonuclease activity"/>
    <property type="evidence" value="ECO:0007669"/>
    <property type="project" value="UniProtKB-KW"/>
</dbReference>
<dbReference type="GO" id="GO:0019002">
    <property type="term" value="F:GMP binding"/>
    <property type="evidence" value="ECO:0000314"/>
    <property type="project" value="UniProtKB"/>
</dbReference>
<dbReference type="GO" id="GO:0005525">
    <property type="term" value="F:GTP binding"/>
    <property type="evidence" value="ECO:0007669"/>
    <property type="project" value="UniProtKB-KW"/>
</dbReference>
<dbReference type="GO" id="GO:0030145">
    <property type="term" value="F:manganese ion binding"/>
    <property type="evidence" value="ECO:0000314"/>
    <property type="project" value="UniProtKB"/>
</dbReference>
<dbReference type="GO" id="GO:0003972">
    <property type="term" value="F:RNA ligase (ATP) activity"/>
    <property type="evidence" value="ECO:0000314"/>
    <property type="project" value="UniProtKB"/>
</dbReference>
<dbReference type="GO" id="GO:0170057">
    <property type="term" value="F:RNA ligase (GTP) activity"/>
    <property type="evidence" value="ECO:0007669"/>
    <property type="project" value="UniProtKB-EC"/>
</dbReference>
<dbReference type="GO" id="GO:0016539">
    <property type="term" value="P:intein-mediated protein splicing"/>
    <property type="evidence" value="ECO:0007669"/>
    <property type="project" value="InterPro"/>
</dbReference>
<dbReference type="GO" id="GO:0006314">
    <property type="term" value="P:intron homing"/>
    <property type="evidence" value="ECO:0007669"/>
    <property type="project" value="UniProtKB-KW"/>
</dbReference>
<dbReference type="GO" id="GO:0000394">
    <property type="term" value="P:RNA splicing, via endonucleolytic cleavage and ligation"/>
    <property type="evidence" value="ECO:0000314"/>
    <property type="project" value="UniProtKB"/>
</dbReference>
<dbReference type="GO" id="GO:0008033">
    <property type="term" value="P:tRNA processing"/>
    <property type="evidence" value="ECO:0007669"/>
    <property type="project" value="UniProtKB-KW"/>
</dbReference>
<dbReference type="CDD" id="cd00081">
    <property type="entry name" value="Hint"/>
    <property type="match status" value="1"/>
</dbReference>
<dbReference type="FunFam" id="3.90.1860.10:FF:000007">
    <property type="entry name" value="tRNA-splicing ligase RtcB"/>
    <property type="match status" value="1"/>
</dbReference>
<dbReference type="Gene3D" id="3.10.28.10">
    <property type="entry name" value="Homing endonucleases"/>
    <property type="match status" value="1"/>
</dbReference>
<dbReference type="Gene3D" id="3.90.1860.10">
    <property type="entry name" value="tRNA-splicing ligase RtcB"/>
    <property type="match status" value="2"/>
</dbReference>
<dbReference type="InterPro" id="IPR003586">
    <property type="entry name" value="Hint_dom_C"/>
</dbReference>
<dbReference type="InterPro" id="IPR003587">
    <property type="entry name" value="Hint_dom_N"/>
</dbReference>
<dbReference type="InterPro" id="IPR036844">
    <property type="entry name" value="Hint_dom_sf"/>
</dbReference>
<dbReference type="InterPro" id="IPR027434">
    <property type="entry name" value="Homing_endonucl"/>
</dbReference>
<dbReference type="InterPro" id="IPR006142">
    <property type="entry name" value="INTEIN"/>
</dbReference>
<dbReference type="InterPro" id="IPR030934">
    <property type="entry name" value="Intein_C"/>
</dbReference>
<dbReference type="InterPro" id="IPR004042">
    <property type="entry name" value="Intein_endonuc_central"/>
</dbReference>
<dbReference type="InterPro" id="IPR006141">
    <property type="entry name" value="Intein_N"/>
</dbReference>
<dbReference type="InterPro" id="IPR004860">
    <property type="entry name" value="LAGLIDADG_dom"/>
</dbReference>
<dbReference type="InterPro" id="IPR001233">
    <property type="entry name" value="RtcB"/>
</dbReference>
<dbReference type="InterPro" id="IPR036025">
    <property type="entry name" value="RtcB-like_sf"/>
</dbReference>
<dbReference type="NCBIfam" id="TIGR01443">
    <property type="entry name" value="intein_Cterm"/>
    <property type="match status" value="1"/>
</dbReference>
<dbReference type="NCBIfam" id="TIGR01445">
    <property type="entry name" value="intein_Nterm"/>
    <property type="match status" value="1"/>
</dbReference>
<dbReference type="PANTHER" id="PTHR11118">
    <property type="entry name" value="RNA-SPLICING LIGASE RTCB HOMOLOG"/>
    <property type="match status" value="1"/>
</dbReference>
<dbReference type="PANTHER" id="PTHR11118:SF1">
    <property type="entry name" value="RNA-SPLICING LIGASE RTCB HOMOLOG"/>
    <property type="match status" value="1"/>
</dbReference>
<dbReference type="Pfam" id="PF14890">
    <property type="entry name" value="Intein_splicing"/>
    <property type="match status" value="1"/>
</dbReference>
<dbReference type="Pfam" id="PF14528">
    <property type="entry name" value="LAGLIDADG_3"/>
    <property type="match status" value="1"/>
</dbReference>
<dbReference type="Pfam" id="PF01139">
    <property type="entry name" value="RtcB"/>
    <property type="match status" value="2"/>
</dbReference>
<dbReference type="PRINTS" id="PR00379">
    <property type="entry name" value="INTEIN"/>
</dbReference>
<dbReference type="SMART" id="SM00305">
    <property type="entry name" value="HintC"/>
    <property type="match status" value="1"/>
</dbReference>
<dbReference type="SMART" id="SM00306">
    <property type="entry name" value="HintN"/>
    <property type="match status" value="1"/>
</dbReference>
<dbReference type="SUPFAM" id="SSF51294">
    <property type="entry name" value="Hedgehog/intein (Hint) domain"/>
    <property type="match status" value="1"/>
</dbReference>
<dbReference type="SUPFAM" id="SSF55608">
    <property type="entry name" value="Homing endonucleases"/>
    <property type="match status" value="1"/>
</dbReference>
<dbReference type="SUPFAM" id="SSF103365">
    <property type="entry name" value="Hypothetical protein PH1602"/>
    <property type="match status" value="2"/>
</dbReference>
<dbReference type="PROSITE" id="PS50818">
    <property type="entry name" value="INTEIN_C_TER"/>
    <property type="match status" value="1"/>
</dbReference>
<dbReference type="PROSITE" id="PS50819">
    <property type="entry name" value="INTEIN_ENDONUCLEASE"/>
    <property type="match status" value="1"/>
</dbReference>
<dbReference type="PROSITE" id="PS50817">
    <property type="entry name" value="INTEIN_N_TER"/>
    <property type="match status" value="1"/>
</dbReference>
<organism>
    <name type="scientific">Pyrococcus horikoshii (strain ATCC 700860 / DSM 12428 / JCM 9974 / NBRC 100139 / OT-3)</name>
    <dbReference type="NCBI Taxonomy" id="70601"/>
    <lineage>
        <taxon>Archaea</taxon>
        <taxon>Methanobacteriati</taxon>
        <taxon>Methanobacteriota</taxon>
        <taxon>Thermococci</taxon>
        <taxon>Thermococcales</taxon>
        <taxon>Thermococcaceae</taxon>
        <taxon>Pyrococcus</taxon>
    </lineage>
</organism>
<keyword id="KW-0002">3D-structure</keyword>
<keyword id="KW-0068">Autocatalytic cleavage</keyword>
<keyword id="KW-0238">DNA-binding</keyword>
<keyword id="KW-0255">Endonuclease</keyword>
<keyword id="KW-0342">GTP-binding</keyword>
<keyword id="KW-0378">Hydrolase</keyword>
<keyword id="KW-0404">Intron homing</keyword>
<keyword id="KW-0436">Ligase</keyword>
<keyword id="KW-0464">Manganese</keyword>
<keyword id="KW-0479">Metal-binding</keyword>
<keyword id="KW-0540">Nuclease</keyword>
<keyword id="KW-0547">Nucleotide-binding</keyword>
<keyword id="KW-0651">Protein splicing</keyword>
<keyword id="KW-0819">tRNA processing</keyword>
<accession>O59245</accession>
<proteinExistence type="evidence at protein level"/>
<protein>
    <recommendedName>
        <fullName evidence="8">tRNA-splicing ligase RtcB</fullName>
        <ecNumber evidence="3 4">6.5.1.8</ecNumber>
    </recommendedName>
    <alternativeName>
        <fullName evidence="8">3'-phosphate/5'-hydroxy nucleic acid ligase</fullName>
    </alternativeName>
    <alternativeName>
        <fullName evidence="7">tRNA ligase RtcB</fullName>
    </alternativeName>
    <component>
        <recommendedName>
            <fullName>Pho hyp2 intein</fullName>
            <ecNumber>3.1.-.-</ecNumber>
        </recommendedName>
    </component>
</protein>
<evidence type="ECO:0000255" key="1">
    <source>
        <dbReference type="PROSITE-ProRule" id="PRU00273"/>
    </source>
</evidence>
<evidence type="ECO:0000269" key="2">
    <source>
    </source>
</evidence>
<evidence type="ECO:0000269" key="3">
    <source>
    </source>
</evidence>
<evidence type="ECO:0000269" key="4">
    <source>
    </source>
</evidence>
<evidence type="ECO:0000269" key="5">
    <source>
    </source>
</evidence>
<evidence type="ECO:0000269" key="6">
    <source>
    </source>
</evidence>
<evidence type="ECO:0000303" key="7">
    <source>
    </source>
</evidence>
<evidence type="ECO:0000305" key="8"/>
<evidence type="ECO:0000305" key="9">
    <source>
    </source>
</evidence>
<evidence type="ECO:0000305" key="10">
    <source>
    </source>
</evidence>
<evidence type="ECO:0000305" key="11">
    <source>
    </source>
</evidence>
<evidence type="ECO:0007744" key="12">
    <source>
        <dbReference type="PDB" id="1UC2"/>
    </source>
</evidence>
<evidence type="ECO:0007744" key="13">
    <source>
        <dbReference type="PDB" id="4DWQ"/>
    </source>
</evidence>
<evidence type="ECO:0007744" key="14">
    <source>
        <dbReference type="PDB" id="4DWR"/>
    </source>
</evidence>
<evidence type="ECO:0007744" key="15">
    <source>
        <dbReference type="PDB" id="4ISJ"/>
    </source>
</evidence>
<evidence type="ECO:0007744" key="16">
    <source>
        <dbReference type="PDB" id="4ISZ"/>
    </source>
</evidence>
<evidence type="ECO:0007744" key="17">
    <source>
        <dbReference type="PDB" id="4IT0"/>
    </source>
</evidence>
<evidence type="ECO:0007829" key="18">
    <source>
        <dbReference type="PDB" id="1UC2"/>
    </source>
</evidence>
<evidence type="ECO:0007829" key="19">
    <source>
        <dbReference type="PDB" id="4DWR"/>
    </source>
</evidence>
<evidence type="ECO:0007829" key="20">
    <source>
        <dbReference type="PDB" id="8DCD"/>
    </source>
</evidence>
<reference key="1">
    <citation type="journal article" date="1998" name="DNA Res.">
        <title>Complete sequence and gene organization of the genome of a hyper-thermophilic archaebacterium, Pyrococcus horikoshii OT3.</title>
        <authorList>
            <person name="Kawarabayasi Y."/>
            <person name="Sawada M."/>
            <person name="Horikawa H."/>
            <person name="Haikawa Y."/>
            <person name="Hino Y."/>
            <person name="Yamamoto S."/>
            <person name="Sekine M."/>
            <person name="Baba S."/>
            <person name="Kosugi H."/>
            <person name="Hosoyama A."/>
            <person name="Nagai Y."/>
            <person name="Sakai M."/>
            <person name="Ogura K."/>
            <person name="Otsuka R."/>
            <person name="Nakazawa H."/>
            <person name="Takamiya M."/>
            <person name="Ohfuku Y."/>
            <person name="Funahashi T."/>
            <person name="Tanaka T."/>
            <person name="Kudoh Y."/>
            <person name="Yamazaki J."/>
            <person name="Kushida N."/>
            <person name="Oguchi A."/>
            <person name="Aoki K."/>
            <person name="Yoshizawa T."/>
            <person name="Nakamura Y."/>
            <person name="Robb F.T."/>
            <person name="Horikoshi K."/>
            <person name="Masuchi Y."/>
            <person name="Shizuya H."/>
            <person name="Kikuchi H."/>
        </authorList>
    </citation>
    <scope>NUCLEOTIDE SEQUENCE [LARGE SCALE GENOMIC DNA]</scope>
    <source>
        <strain>ATCC 700860 / DSM 12428 / JCM 9974 / NBRC 100139 / OT-3</strain>
    </source>
</reference>
<reference key="2">
    <citation type="journal article" date="2012" name="Biochemistry">
        <title>tRNA ligase catalyzes the GTP-dependent ligation of RNA with 3'-phosphate and 5'-hydroxyl termini.</title>
        <authorList>
            <person name="Desai K.K."/>
            <person name="Raines R.T."/>
        </authorList>
    </citation>
    <scope>FUNCTION</scope>
    <scope>CATALYTIC ACTIVITY</scope>
    <scope>COFACTOR</scope>
</reference>
<reference key="3">
    <citation type="journal article" date="2014" name="Nucleic Acids Res.">
        <title>A tRNA splicing operon: Archease endows RtcB with dual GTP/ATP cofactor specificity and accelerates RNA ligation.</title>
        <authorList>
            <person name="Desai K.K."/>
            <person name="Cheng C.L."/>
            <person name="Bingman C.A."/>
            <person name="Phillips G.N. Jr."/>
            <person name="Raines R.T."/>
        </authorList>
    </citation>
    <scope>IDENTIFICATION BY MASS SPECTROMETRY</scope>
    <scope>ACTIVITY REGULATION</scope>
    <scope>MUTAGENESIS OF ASP-65; ASP-95; ASN-592; HIS-593; PHE-594; GLU-596; HIS-794 AND LYS-870</scope>
</reference>
<reference evidence="12" key="4">
    <citation type="journal article" date="2006" name="Proteins">
        <title>Crystal structure of an RtcB homolog protein (PH1602-extein protein) from Pyrococcus horikoshii reveals a novel fold.</title>
        <authorList>
            <person name="Okada C."/>
            <person name="Maegawa Y."/>
            <person name="Yao M."/>
            <person name="Tanaka I."/>
        </authorList>
    </citation>
    <scope>X-RAY CRYSTALLOGRAPHY (2.15 ANGSTROMS) OF 1-97 AND 488-871</scope>
    <scope>SUBUNIT</scope>
</reference>
<reference evidence="13 14" key="5">
    <citation type="journal article" date="2012" name="Proc. Natl. Acad. Sci. U.S.A.">
        <title>Structural and mechanistic insights into guanylylation of RNA-splicing ligase RtcB joining RNA between 3'-terminal phosphate and 5'-OH.</title>
        <authorList>
            <person name="Englert M."/>
            <person name="Xia S."/>
            <person name="Okada C."/>
            <person name="Nakamura A."/>
            <person name="Tanavde V."/>
            <person name="Yao M."/>
            <person name="Eom S.H."/>
            <person name="Konigsberg W.H."/>
            <person name="Soll D."/>
            <person name="Wang J."/>
        </authorList>
    </citation>
    <scope>X-RAY CRYSTALLOGRAPHY (1.48 ANGSTROMS) IN COMPLEX WITH MANGANESE AND GMP</scope>
    <scope>COFACTOR</scope>
    <scope>ACTIVE SITE</scope>
    <scope>FUNCTION</scope>
    <scope>CATALYTIC ACTIVITY</scope>
    <scope>REACTION MECHANISM</scope>
    <scope>MUTAGENESIS OF ASP-65; ASP-95; HIS-593; HIS-719; HIS-794; ARG-798 AND ARG-802</scope>
</reference>
<reference evidence="15 16 17" key="6">
    <citation type="journal article" date="2013" name="Biochemistry">
        <title>Structures of the noncanonical RNA ligase RtcB reveal the mechanism of histidine guanylylation.</title>
        <authorList>
            <person name="Desai K.K."/>
            <person name="Bingman C.A."/>
            <person name="Phillips G.N. Jr."/>
            <person name="Raines R.T."/>
        </authorList>
    </citation>
    <scope>X-RAY CRYSTALLOGRAPHY (2.30 ANGSTROMS) IN COMPLEX WITH MANGANESE AND GMP</scope>
    <scope>COFACTOR</scope>
    <scope>ACTIVE SITE</scope>
    <scope>REACTION MECHANISM</scope>
</reference>
<name>RTCB_PYRHO</name>
<feature type="chain" id="PRO_0000232535" description="tRNA-splicing ligase RtcB, 1st part">
    <location>
        <begin position="1"/>
        <end position="97"/>
    </location>
</feature>
<feature type="chain" id="PRO_0000232536" description="Pho hyp2 intein">
    <location>
        <begin position="98"/>
        <end position="487"/>
    </location>
</feature>
<feature type="chain" id="PRO_0000232537" description="tRNA-splicing ligase RtcB, 2nd part">
    <location>
        <begin position="488"/>
        <end position="871"/>
    </location>
</feature>
<feature type="domain" description="DOD-type homing endonuclease" evidence="1">
    <location>
        <begin position="248"/>
        <end position="374"/>
    </location>
</feature>
<feature type="active site" description="GMP-histidine intermediate" evidence="4 5">
    <location>
        <position position="794"/>
    </location>
</feature>
<feature type="binding site" evidence="4 5">
    <location>
        <position position="95"/>
    </location>
    <ligand>
        <name>Mn(2+)</name>
        <dbReference type="ChEBI" id="CHEBI:29035"/>
        <label>1</label>
    </ligand>
</feature>
<feature type="binding site" evidence="4 5">
    <location>
        <position position="488"/>
    </location>
    <ligand>
        <name>Mn(2+)</name>
        <dbReference type="ChEBI" id="CHEBI:29035"/>
        <label>1</label>
    </ligand>
</feature>
<feature type="binding site" evidence="4 5">
    <location>
        <position position="488"/>
    </location>
    <ligand>
        <name>Mn(2+)</name>
        <dbReference type="ChEBI" id="CHEBI:29035"/>
        <label>2</label>
    </ligand>
</feature>
<feature type="binding site" evidence="4 5">
    <location>
        <begin position="592"/>
        <end position="596"/>
    </location>
    <ligand>
        <name>GMP</name>
        <dbReference type="ChEBI" id="CHEBI:58115"/>
    </ligand>
</feature>
<feature type="binding site" evidence="4 5">
    <location>
        <position position="593"/>
    </location>
    <ligand>
        <name>Mn(2+)</name>
        <dbReference type="ChEBI" id="CHEBI:29035"/>
        <label>1</label>
    </ligand>
</feature>
<feature type="binding site" evidence="4 5">
    <location>
        <position position="624"/>
    </location>
    <ligand>
        <name>Mn(2+)</name>
        <dbReference type="ChEBI" id="CHEBI:29035"/>
        <label>2</label>
    </ligand>
</feature>
<feature type="binding site" evidence="4 5">
    <location>
        <begin position="719"/>
        <end position="720"/>
    </location>
    <ligand>
        <name>GMP</name>
        <dbReference type="ChEBI" id="CHEBI:58115"/>
    </ligand>
</feature>
<feature type="binding site" evidence="4 5">
    <location>
        <position position="719"/>
    </location>
    <ligand>
        <name>Mn(2+)</name>
        <dbReference type="ChEBI" id="CHEBI:29035"/>
        <label>2</label>
    </ligand>
</feature>
<feature type="binding site" evidence="4 5">
    <location>
        <begin position="768"/>
        <end position="771"/>
    </location>
    <ligand>
        <name>GMP</name>
        <dbReference type="ChEBI" id="CHEBI:58115"/>
    </ligand>
</feature>
<feature type="binding site" evidence="4 5">
    <location>
        <position position="775"/>
    </location>
    <ligand>
        <name>GMP</name>
        <dbReference type="ChEBI" id="CHEBI:58115"/>
    </ligand>
</feature>
<feature type="binding site" evidence="4 5">
    <location>
        <begin position="794"/>
        <end position="797"/>
    </location>
    <ligand>
        <name>GMP</name>
        <dbReference type="ChEBI" id="CHEBI:58115"/>
    </ligand>
</feature>
<feature type="binding site" evidence="4 5">
    <location>
        <position position="870"/>
    </location>
    <ligand>
        <name>GMP</name>
        <dbReference type="ChEBI" id="CHEBI:58115"/>
    </ligand>
</feature>
<feature type="mutagenesis site" description="Abolishes formation of guanylylated RtcB intermediate." evidence="4 6">
    <original>D</original>
    <variation>A</variation>
    <location>
        <position position="65"/>
    </location>
</feature>
<feature type="mutagenesis site" description="Abolishes tRNA ligation activity." evidence="4 6">
    <original>D</original>
    <variation>A</variation>
    <location>
        <position position="95"/>
    </location>
</feature>
<feature type="mutagenesis site" description="Abolishes tRNA ligation activity in vitro." evidence="6">
    <original>N</original>
    <variation>A</variation>
    <location>
        <position position="592"/>
    </location>
</feature>
<feature type="mutagenesis site" description="Abolishes tRNA ligation activity." evidence="4 6">
    <original>H</original>
    <variation>A</variation>
    <location>
        <position position="593"/>
    </location>
</feature>
<feature type="mutagenesis site" description="Abolishes tRNA ligation activity in vitro. Can be rescued in presence of archease (PH1536)." evidence="6">
    <original>F</original>
    <variation>A</variation>
    <location>
        <position position="594"/>
    </location>
</feature>
<feature type="mutagenesis site" description="Abolishes tRNA ligation activity in vitro. Can be rescued in presence of archease (PH1536)." evidence="6">
    <original>E</original>
    <variation>A</variation>
    <location>
        <position position="596"/>
    </location>
</feature>
<feature type="mutagenesis site" description="Only produces few amount of guanylylated RtcB intermediate." evidence="4">
    <original>H</original>
    <variation>A</variation>
    <location>
        <position position="719"/>
    </location>
</feature>
<feature type="mutagenesis site" description="Loss of function. Abolishes formation of guanylylated RtcB intermediate." evidence="4 6">
    <original>H</original>
    <variation>A</variation>
    <location>
        <position position="794"/>
    </location>
</feature>
<feature type="mutagenesis site" description="Loss of function. Still able to form some guanylylated RtcB intermediate but is unable to carry out subsequent transfer of GMP." evidence="4 6">
    <original>H</original>
    <variation>K</variation>
    <location>
        <position position="794"/>
    </location>
</feature>
<feature type="mutagenesis site" description="Impaired formation of guanylylated RtcB intermediate." evidence="4">
    <original>R</original>
    <variation>A</variation>
    <location>
        <position position="798"/>
    </location>
</feature>
<feature type="mutagenesis site" description="Impaired formation of guanylylated RtcB intermediate." evidence="4">
    <original>R</original>
    <variation>A</variation>
    <location>
        <position position="802"/>
    </location>
</feature>
<feature type="mutagenesis site" description="Abolishes tRNA ligation activity in vitro. Can be rescued in presence of archease (PH1536)." evidence="6">
    <original>K</original>
    <variation>A</variation>
    <location>
        <position position="870"/>
    </location>
</feature>
<feature type="strand" evidence="19">
    <location>
        <begin position="415"/>
        <end position="417"/>
    </location>
</feature>
<feature type="helix" evidence="19">
    <location>
        <begin position="422"/>
        <end position="429"/>
    </location>
</feature>
<feature type="strand" evidence="18">
    <location>
        <begin position="431"/>
        <end position="433"/>
    </location>
</feature>
<feature type="helix" evidence="19">
    <location>
        <begin position="434"/>
        <end position="437"/>
    </location>
</feature>
<feature type="helix" evidence="19">
    <location>
        <begin position="439"/>
        <end position="442"/>
    </location>
</feature>
<feature type="strand" evidence="19">
    <location>
        <begin position="452"/>
        <end position="459"/>
    </location>
</feature>
<feature type="strand" evidence="19">
    <location>
        <begin position="462"/>
        <end position="464"/>
    </location>
</feature>
<feature type="strand" evidence="19">
    <location>
        <begin position="466"/>
        <end position="473"/>
    </location>
</feature>
<feature type="turn" evidence="19">
    <location>
        <begin position="474"/>
        <end position="476"/>
    </location>
</feature>
<feature type="helix" evidence="19">
    <location>
        <begin position="481"/>
        <end position="483"/>
    </location>
</feature>
<feature type="strand" evidence="19">
    <location>
        <begin position="489"/>
        <end position="493"/>
    </location>
</feature>
<feature type="helix" evidence="19">
    <location>
        <begin position="499"/>
        <end position="502"/>
    </location>
</feature>
<feature type="helix" evidence="19">
    <location>
        <begin position="503"/>
        <end position="505"/>
    </location>
</feature>
<feature type="helix" evidence="19">
    <location>
        <begin position="506"/>
        <end position="516"/>
    </location>
</feature>
<feature type="strand" evidence="19">
    <location>
        <begin position="520"/>
        <end position="522"/>
    </location>
</feature>
<feature type="helix" evidence="19">
    <location>
        <begin position="531"/>
        <end position="533"/>
    </location>
</feature>
<feature type="helix" evidence="19">
    <location>
        <begin position="535"/>
        <end position="540"/>
    </location>
</feature>
<feature type="helix" evidence="19">
    <location>
        <begin position="542"/>
        <end position="547"/>
    </location>
</feature>
<feature type="helix" evidence="19">
    <location>
        <begin position="553"/>
        <end position="558"/>
    </location>
</feature>
<feature type="helix" evidence="19">
    <location>
        <begin position="560"/>
        <end position="563"/>
    </location>
</feature>
<feature type="helix" evidence="19">
    <location>
        <begin position="570"/>
        <end position="572"/>
    </location>
</feature>
<feature type="helix" evidence="19">
    <location>
        <begin position="575"/>
        <end position="581"/>
    </location>
</feature>
<feature type="helix" evidence="19">
    <location>
        <begin position="582"/>
        <end position="584"/>
    </location>
</feature>
<feature type="strand" evidence="19">
    <location>
        <begin position="590"/>
        <end position="592"/>
    </location>
</feature>
<feature type="strand" evidence="19">
    <location>
        <begin position="594"/>
        <end position="604"/>
    </location>
</feature>
<feature type="helix" evidence="19">
    <location>
        <begin position="606"/>
        <end position="611"/>
    </location>
</feature>
<feature type="strand" evidence="19">
    <location>
        <begin position="618"/>
        <end position="625"/>
    </location>
</feature>
<feature type="helix" evidence="19">
    <location>
        <begin position="628"/>
        <end position="645"/>
    </location>
</feature>
<feature type="helix" evidence="19">
    <location>
        <begin position="646"/>
        <end position="648"/>
    </location>
</feature>
<feature type="helix" evidence="20">
    <location>
        <begin position="656"/>
        <end position="658"/>
    </location>
</feature>
<feature type="helix" evidence="19">
    <location>
        <begin position="666"/>
        <end position="701"/>
    </location>
</feature>
<feature type="turn" evidence="19">
    <location>
        <begin position="705"/>
        <end position="709"/>
    </location>
</feature>
<feature type="strand" evidence="19">
    <location>
        <begin position="713"/>
        <end position="729"/>
    </location>
</feature>
<feature type="strand" evidence="19">
    <location>
        <begin position="732"/>
        <end position="745"/>
    </location>
</feature>
<feature type="helix" evidence="19">
    <location>
        <begin position="756"/>
        <end position="758"/>
    </location>
</feature>
<feature type="turn" evidence="19">
    <location>
        <begin position="759"/>
        <end position="761"/>
    </location>
</feature>
<feature type="strand" evidence="19">
    <location>
        <begin position="764"/>
        <end position="767"/>
    </location>
</feature>
<feature type="strand" evidence="19">
    <location>
        <begin position="775"/>
        <end position="779"/>
    </location>
</feature>
<feature type="helix" evidence="19">
    <location>
        <begin position="782"/>
        <end position="787"/>
    </location>
</feature>
<feature type="strand" evidence="19">
    <location>
        <begin position="788"/>
        <end position="793"/>
    </location>
</feature>
<feature type="strand" evidence="19">
    <location>
        <begin position="798"/>
        <end position="800"/>
    </location>
</feature>
<feature type="helix" evidence="19">
    <location>
        <begin position="802"/>
        <end position="806"/>
    </location>
</feature>
<feature type="helix" evidence="19">
    <location>
        <begin position="811"/>
        <end position="820"/>
    </location>
</feature>
<feature type="strand" evidence="19">
    <location>
        <begin position="824"/>
        <end position="826"/>
    </location>
</feature>
<feature type="helix" evidence="19">
    <location>
        <begin position="831"/>
        <end position="835"/>
    </location>
</feature>
<feature type="helix" evidence="19">
    <location>
        <begin position="838"/>
        <end position="840"/>
    </location>
</feature>
<feature type="helix" evidence="19">
    <location>
        <begin position="844"/>
        <end position="853"/>
    </location>
</feature>
<feature type="strand" evidence="19">
    <location>
        <begin position="856"/>
        <end position="869"/>
    </location>
</feature>
<gene>
    <name type="primary">rtcB</name>
    <name type="ordered locus">PH1602</name>
</gene>
<sequence>MVVPLKRIDKIRWEIPKFDKRMRVPGRVYADEVLLEKMKNDRTLEQATNVAMLPGIYKYSIVMPDGHQGYGFPIGGVAAFDVKEGVISPGGIGYDINCLAPGTRVLTEHGYWLKIEEMPEKFKLQRLRVYNIEEGHNDFSKVVFVAEREVGSEEKAIRIVTESGKVIEGSEDHPVLTPEGYVYLRNVKEGDYILVYPFEGVPYEEKKGVILDESAFEGEDPQVVKFLRERNLIPLQWKDPKVGILARILGFALANGYISENDNLTFHGKEEVLREVRKDLEELGIEAIVAEEDKLKVTSREFAFLLEKLGMAHDSIPEWIIEGPLWIKRNFLAGLFGANGSIVEFKGDVPLPITLTHSRELLNDVSRILEGFKVRAKIKMGKNGSYQLVIEDEDSIRNFLGRINYEYDPEKKARGLIAYAYLKFKELMKGNLMTFEEFARDRGYEGGFVAEKVIEVKSVKPEYDKFYDIGVYHSAHNFIANGIVVHNCGVRLIRTNLTEKEVRPRIKQLVDTLFKNVPSGVGSQGRIKLHWTQIDDVLVDGAKWAVDNGYGWERDLERLEEGGRMEGADPEAVSQRAKQRGAPQLGSLGSGNHFLEVQVVDKIFDPEVAKAYGLFEGQVVVMVHTGSRGLGHQVASDYLRIMERAIRKYRIPWPDRELVSVPFQSEEGQRYFSAMKAAANFAWANRQMITHWVRESFQEVFKQDPEGDLGMDIVYDVAHNIGKVEEHEVDGKRVKVIVHRKGATRAFPPGHEAVPRLYRDVGQPVLIPGSMGTASYILAGTEGAMKETFGSTCHGAGRVLSRKAATRQYRGDRIRQELLNRGIYVRAASMRVVAEEAPGAYKNVDNVVKVVSEAGIAKLVARMRPIGVAKG</sequence>
<comment type="function">
    <text evidence="3 4 9">Essential for tRNA splicing and maturation (Probable). Acts by directly joining spliced tRNA halves to mature-sized tRNAs (PubMed:22320833, PubMed:22949672). Joins RNA with 2',3'-cyclic-phosphate or 3'-phosphate ends to RNA with 5'-hydroxy ends (PubMed:22320833, PubMed:22949672).</text>
</comment>
<comment type="catalytic activity">
    <reaction evidence="3 4">
        <text>a 3'-end 3'-phospho-ribonucleotide-RNA + a 5'-end dephospho-ribonucleoside-RNA + GTP = a ribonucleotidyl-ribonucleotide-RNA + GMP + diphosphate</text>
        <dbReference type="Rhea" id="RHEA:68076"/>
        <dbReference type="Rhea" id="RHEA-COMP:10463"/>
        <dbReference type="Rhea" id="RHEA-COMP:13936"/>
        <dbReference type="Rhea" id="RHEA-COMP:17355"/>
        <dbReference type="ChEBI" id="CHEBI:33019"/>
        <dbReference type="ChEBI" id="CHEBI:37565"/>
        <dbReference type="ChEBI" id="CHEBI:58115"/>
        <dbReference type="ChEBI" id="CHEBI:83062"/>
        <dbReference type="ChEBI" id="CHEBI:138284"/>
        <dbReference type="ChEBI" id="CHEBI:173118"/>
        <dbReference type="EC" id="6.5.1.8"/>
    </reaction>
</comment>
<comment type="catalytic activity">
    <reaction evidence="3">
        <text>a 3'-end 2',3'-cyclophospho-ribonucleotide-RNA + a 5'-end dephospho-ribonucleoside-RNA + GTP + H2O = a ribonucleotidyl-ribonucleotide-RNA + GMP + diphosphate + H(+)</text>
        <dbReference type="Rhea" id="RHEA:68080"/>
        <dbReference type="Rhea" id="RHEA-COMP:10464"/>
        <dbReference type="Rhea" id="RHEA-COMP:13936"/>
        <dbReference type="Rhea" id="RHEA-COMP:17355"/>
        <dbReference type="ChEBI" id="CHEBI:15377"/>
        <dbReference type="ChEBI" id="CHEBI:15378"/>
        <dbReference type="ChEBI" id="CHEBI:33019"/>
        <dbReference type="ChEBI" id="CHEBI:37565"/>
        <dbReference type="ChEBI" id="CHEBI:58115"/>
        <dbReference type="ChEBI" id="CHEBI:83064"/>
        <dbReference type="ChEBI" id="CHEBI:138284"/>
        <dbReference type="ChEBI" id="CHEBI:173118"/>
        <dbReference type="EC" id="6.5.1.8"/>
    </reaction>
</comment>
<comment type="cofactor">
    <cofactor evidence="3 4 5">
        <name>Mn(2+)</name>
        <dbReference type="ChEBI" id="CHEBI:29035"/>
    </cofactor>
    <text evidence="4 5">Binds 2 manganese ions per subunit.</text>
</comment>
<comment type="activity regulation">
    <text evidence="6">Activated by archease, which accelerates both the RNA 3'-P guanylylation and ligation steps (PubMed:24435797). Archease also expands the NTP specificity of RtcB, enabling the efficient use of dGTP, ATP or ITP (PubMed:24435797).</text>
</comment>
<comment type="subunit">
    <text evidence="2 4">Monomer.</text>
</comment>
<comment type="PTM">
    <text evidence="8">This protein undergoes a protein self splicing that involves a post-translational excision of the intervening region (intein) followed by peptide ligation.</text>
</comment>
<comment type="miscellaneous">
    <text evidence="10 11">Ligation proceeds through 3 nucleotidyl transfer steps, with 2',3'-cyclic phosphate termini being hydrolyzed to 3'-P termini in a step that precedes 3'-P activation with GMP. In the first nucleotidyl transfer step, RtcB reacts with GTP to form a covalent RtcB-histidine-GMP intermediate with release of PPi; in the second step, the GMP moiety is transferred to the RNA 3'-P; in the third step, the 5'-OH from the opposite RNA strand attacks the activated 3'-P to form a 3',5'-phosphodiester bond and release GMP.</text>
</comment>
<comment type="similarity">
    <text evidence="8">Belongs to the RtcB family.</text>
</comment>